<protein>
    <recommendedName>
        <fullName evidence="1">Large ribosomal subunit protein bL28</fullName>
    </recommendedName>
    <alternativeName>
        <fullName evidence="2">50S ribosomal protein L28</fullName>
    </alternativeName>
</protein>
<keyword id="KW-0687">Ribonucleoprotein</keyword>
<keyword id="KW-0689">Ribosomal protein</keyword>
<accession>Q5N223</accession>
<gene>
    <name evidence="1" type="primary">rpmB</name>
    <name evidence="1" type="synonym">rpl28</name>
    <name type="ordered locus">syc1457_d</name>
</gene>
<evidence type="ECO:0000255" key="1">
    <source>
        <dbReference type="HAMAP-Rule" id="MF_00373"/>
    </source>
</evidence>
<evidence type="ECO:0000305" key="2"/>
<dbReference type="EMBL" id="AP008231">
    <property type="protein sequence ID" value="BAD79647.1"/>
    <property type="molecule type" value="Genomic_DNA"/>
</dbReference>
<dbReference type="RefSeq" id="WP_011243767.1">
    <property type="nucleotide sequence ID" value="NZ_CP085785.1"/>
</dbReference>
<dbReference type="SMR" id="Q5N223"/>
<dbReference type="GeneID" id="72428851"/>
<dbReference type="KEGG" id="syc:syc1457_d"/>
<dbReference type="eggNOG" id="COG0227">
    <property type="taxonomic scope" value="Bacteria"/>
</dbReference>
<dbReference type="Proteomes" id="UP000001175">
    <property type="component" value="Chromosome"/>
</dbReference>
<dbReference type="GO" id="GO:1990904">
    <property type="term" value="C:ribonucleoprotein complex"/>
    <property type="evidence" value="ECO:0007669"/>
    <property type="project" value="UniProtKB-KW"/>
</dbReference>
<dbReference type="GO" id="GO:0005840">
    <property type="term" value="C:ribosome"/>
    <property type="evidence" value="ECO:0007669"/>
    <property type="project" value="UniProtKB-KW"/>
</dbReference>
<dbReference type="GO" id="GO:0003735">
    <property type="term" value="F:structural constituent of ribosome"/>
    <property type="evidence" value="ECO:0007669"/>
    <property type="project" value="InterPro"/>
</dbReference>
<dbReference type="GO" id="GO:0006412">
    <property type="term" value="P:translation"/>
    <property type="evidence" value="ECO:0007669"/>
    <property type="project" value="UniProtKB-UniRule"/>
</dbReference>
<dbReference type="Gene3D" id="2.30.170.40">
    <property type="entry name" value="Ribosomal protein L28/L24"/>
    <property type="match status" value="1"/>
</dbReference>
<dbReference type="HAMAP" id="MF_00373">
    <property type="entry name" value="Ribosomal_bL28"/>
    <property type="match status" value="1"/>
</dbReference>
<dbReference type="InterPro" id="IPR026569">
    <property type="entry name" value="Ribosomal_bL28"/>
</dbReference>
<dbReference type="InterPro" id="IPR034704">
    <property type="entry name" value="Ribosomal_bL28/bL31-like_sf"/>
</dbReference>
<dbReference type="InterPro" id="IPR001383">
    <property type="entry name" value="Ribosomal_bL28_bact-type"/>
</dbReference>
<dbReference type="InterPro" id="IPR037147">
    <property type="entry name" value="Ribosomal_bL28_sf"/>
</dbReference>
<dbReference type="NCBIfam" id="TIGR00009">
    <property type="entry name" value="L28"/>
    <property type="match status" value="1"/>
</dbReference>
<dbReference type="PANTHER" id="PTHR13528">
    <property type="entry name" value="39S RIBOSOMAL PROTEIN L28, MITOCHONDRIAL"/>
    <property type="match status" value="1"/>
</dbReference>
<dbReference type="PANTHER" id="PTHR13528:SF2">
    <property type="entry name" value="LARGE RIBOSOMAL SUBUNIT PROTEIN BL28M"/>
    <property type="match status" value="1"/>
</dbReference>
<dbReference type="Pfam" id="PF00830">
    <property type="entry name" value="Ribosomal_L28"/>
    <property type="match status" value="1"/>
</dbReference>
<dbReference type="SUPFAM" id="SSF143800">
    <property type="entry name" value="L28p-like"/>
    <property type="match status" value="1"/>
</dbReference>
<name>RL28_SYNP6</name>
<proteinExistence type="inferred from homology"/>
<comment type="similarity">
    <text evidence="1">Belongs to the bacterial ribosomal protein bL28 family.</text>
</comment>
<reference key="1">
    <citation type="journal article" date="2007" name="Photosyn. Res.">
        <title>Complete nucleotide sequence of the freshwater unicellular cyanobacterium Synechococcus elongatus PCC 6301 chromosome: gene content and organization.</title>
        <authorList>
            <person name="Sugita C."/>
            <person name="Ogata K."/>
            <person name="Shikata M."/>
            <person name="Jikuya H."/>
            <person name="Takano J."/>
            <person name="Furumichi M."/>
            <person name="Kanehisa M."/>
            <person name="Omata T."/>
            <person name="Sugiura M."/>
            <person name="Sugita M."/>
        </authorList>
    </citation>
    <scope>NUCLEOTIDE SEQUENCE [LARGE SCALE GENOMIC DNA]</scope>
    <source>
        <strain>ATCC 27144 / PCC 6301 / SAUG 1402/1</strain>
    </source>
</reference>
<organism>
    <name type="scientific">Synechococcus sp. (strain ATCC 27144 / PCC 6301 / SAUG 1402/1)</name>
    <name type="common">Anacystis nidulans</name>
    <dbReference type="NCBI Taxonomy" id="269084"/>
    <lineage>
        <taxon>Bacteria</taxon>
        <taxon>Bacillati</taxon>
        <taxon>Cyanobacteriota</taxon>
        <taxon>Cyanophyceae</taxon>
        <taxon>Synechococcales</taxon>
        <taxon>Synechococcaceae</taxon>
        <taxon>Synechococcus</taxon>
    </lineage>
</organism>
<feature type="chain" id="PRO_0000178573" description="Large ribosomal subunit protein bL28">
    <location>
        <begin position="1"/>
        <end position="78"/>
    </location>
</feature>
<sequence length="78" mass="9119">MSRVCQLTGKKANNAYAISHSHRRTKRLQNVNLQEKRIWWPEGNRFVKLRLSTKAIKTLQKKGLSAYARELGIDLKRL</sequence>